<comment type="function">
    <text evidence="2 4 8">E3 ubiquitin-protein ligase that mediates ubiquitination and subsequent proteasomal degradation of target proteins (PubMed:11786535). E3 ubiquitin ligases accept ubiquitin from an E2 ubiquitin-conjugating enzyme in the form of a thioester and then directly transfers the ubiquitin to targeted substrates (PubMed:11786535). Mediates E3 ubiquitin ligase activity either through direct binding to substrates or by functioning as the essential RING domain subunit of larger E3 complexes (By similarity). Mediates ubiquitination and proteasomal degradation of DYRK2 in response to hypoxia (By similarity). Promotes monoubiquitination of SNCA (By similarity). Triggers the ubiquitin-mediated degradation of many substrates, including proteins involved in transcription regulation (GPS2, POU2AF1, PML, NCOR1), a cell surface receptor (DCC), an antiapoptotic protein (BAG1), and a protein involved in synaptic vesicle function in neurons (SYP) (PubMed:11786535). It is thereby involved in apoptosis, tumor suppression, cell cycle, transcription and signaling processes (By similarity). Has some overlapping function with SIAH1 (By similarity). Triggers the ubiquitin-mediated degradation of TRAF2, whereas SIAH1 does not (By similarity). Regulates cellular clock function via ubiquitination of circadian transcriptional repressors NR1D1 and NR1D2 leading to their proteasomal degradation. Plays an important role in mediating the rhythmic degradation/clearance of NR1D1 and NR1D2 contributing to their circadian profile of protein abundance (By similarity). Mediates ubiquitination and degradation of EGLN2 and EGLN3 in response to the unfolded protein response (UPR), leading to their degradation and subsequent stabilization of ATF4 (By similarity). Also part of the Wnt signaling pathway in which it mediates the Wnt-induced ubiquitin-mediated proteasomal degradation of AXIN1 (By similarity).</text>
</comment>
<comment type="catalytic activity">
    <reaction evidence="8">
        <text>S-ubiquitinyl-[E2 ubiquitin-conjugating enzyme]-L-cysteine + [acceptor protein]-L-lysine = [E2 ubiquitin-conjugating enzyme]-L-cysteine + N(6)-ubiquitinyl-[acceptor protein]-L-lysine.</text>
        <dbReference type="EC" id="2.3.2.27"/>
    </reaction>
</comment>
<comment type="pathway">
    <text evidence="8">Protein modification; protein ubiquitination.</text>
</comment>
<comment type="subunit">
    <text evidence="2 4 8 9 10">Homodimer (By similarity). Interacts with VAV1, without mediating its ubiquitin-mediated degradation (By similarity). Probable component of some large E3 complex possibly composed of UBE2D1, SIAH2, CACYBP/SIP, SKP1, APC and TBL1X (By similarity). Interacts with UBE2I (By similarity). Interacts with UBE2E2 (PubMed:11786535). Interacts with PEG10, which may inhibit its activity (By similarity). Interacts with PEG3 and EGLN2 (By similarity). Interacts with DYRK2 (By similarity). Interacts with SNCAIP (PubMed:15064394, PubMed:19224863). Interacts with NR1D1 and NR1D2 (By similarity). Interacts with DCC (By similarity). Interacts with AXIN1.</text>
</comment>
<comment type="subcellular location">
    <subcellularLocation>
        <location evidence="10">Cytoplasm</location>
    </subcellularLocation>
    <subcellularLocation>
        <location evidence="12">Nucleus</location>
    </subcellularLocation>
    <text evidence="2">Predominantly cytoplasmic. Partially nuclear.</text>
</comment>
<comment type="tissue specificity">
    <text evidence="10">Detected in brain (at protein level).</text>
</comment>
<comment type="domain">
    <text>The RING-type zinc finger domain is essential for ubiquitin ligase activity.</text>
</comment>
<comment type="domain">
    <text evidence="3">The SBD domain (substrate-binding domain) mediates the homodimerization and the interaction with substrate proteins. It is related to the TRAF family.</text>
</comment>
<comment type="PTM">
    <text evidence="1">Phosphorylated at Thr-24 and Ser-29 by MAPK14, which mediates the degradation by the proteasome of EGLN3. Phosphorylated at Ser-29 by DYRK2; this increases the ubiquitin ligase activity and promotes degradation of EGLN3 (By similarity).</text>
</comment>
<comment type="similarity">
    <text evidence="11">Belongs to the SINA (Seven in absentia) family.</text>
</comment>
<name>SIAH2_RAT</name>
<evidence type="ECO:0000250" key="1"/>
<evidence type="ECO:0000250" key="2">
    <source>
        <dbReference type="UniProtKB" id="O43255"/>
    </source>
</evidence>
<evidence type="ECO:0000250" key="3">
    <source>
        <dbReference type="UniProtKB" id="P61092"/>
    </source>
</evidence>
<evidence type="ECO:0000250" key="4">
    <source>
        <dbReference type="UniProtKB" id="Q06986"/>
    </source>
</evidence>
<evidence type="ECO:0000255" key="5">
    <source>
        <dbReference type="PROSITE-ProRule" id="PRU00175"/>
    </source>
</evidence>
<evidence type="ECO:0000255" key="6">
    <source>
        <dbReference type="PROSITE-ProRule" id="PRU00455"/>
    </source>
</evidence>
<evidence type="ECO:0000256" key="7">
    <source>
        <dbReference type="SAM" id="MobiDB-lite"/>
    </source>
</evidence>
<evidence type="ECO:0000269" key="8">
    <source>
    </source>
</evidence>
<evidence type="ECO:0000269" key="9">
    <source>
    </source>
</evidence>
<evidence type="ECO:0000269" key="10">
    <source>
    </source>
</evidence>
<evidence type="ECO:0000305" key="11"/>
<evidence type="ECO:0000305" key="12">
    <source>
    </source>
</evidence>
<accession>Q8R4T2</accession>
<accession>Q920M8</accession>
<sequence>MSRPSSTGPSANKPCSKQPPPPQTPHAPSPAAPPAAATISAAGPGSSAVPAAAAVISGPGAGGGAGPVSPQHHELTSLFECPVCFDYVLPPILQCQAGHLVCNQCRQKLSCCPTCRGALTPSIRNLAMEKVASAVLFPCKYATTGCSLTLHHTEKPEHEDICEYRPYSCPCPGASCKWQGSLEAVMSHLMHAHKSITTLQGEDIVFLATDINLPGAVDWVMMQSCFGHHFMLVLEKQEKYEGHQQFFAIVLLIGTRKQAENFAYRLELNGNRRRLTWEATPRSIHDGVAAAIMNSDCLVFDTAIAHLFADNGNLGINVTISTCCQ</sequence>
<keyword id="KW-0053">Apoptosis</keyword>
<keyword id="KW-0090">Biological rhythms</keyword>
<keyword id="KW-0131">Cell cycle</keyword>
<keyword id="KW-0963">Cytoplasm</keyword>
<keyword id="KW-0479">Metal-binding</keyword>
<keyword id="KW-0539">Nucleus</keyword>
<keyword id="KW-0597">Phosphoprotein</keyword>
<keyword id="KW-1185">Reference proteome</keyword>
<keyword id="KW-0808">Transferase</keyword>
<keyword id="KW-0833">Ubl conjugation pathway</keyword>
<keyword id="KW-0862">Zinc</keyword>
<keyword id="KW-0863">Zinc-finger</keyword>
<dbReference type="EC" id="2.3.2.27" evidence="8"/>
<dbReference type="EMBL" id="AB067815">
    <property type="protein sequence ID" value="BAB70754.1"/>
    <property type="molecule type" value="mRNA"/>
</dbReference>
<dbReference type="EMBL" id="AF389477">
    <property type="protein sequence ID" value="AAL91363.1"/>
    <property type="molecule type" value="mRNA"/>
</dbReference>
<dbReference type="RefSeq" id="NP_604452.1">
    <property type="nucleotide sequence ID" value="NM_134457.2"/>
</dbReference>
<dbReference type="SMR" id="Q8R4T2"/>
<dbReference type="BioGRID" id="250807">
    <property type="interactions" value="2"/>
</dbReference>
<dbReference type="FunCoup" id="Q8R4T2">
    <property type="interactions" value="1693"/>
</dbReference>
<dbReference type="STRING" id="10116.ENSRNOP00000018488"/>
<dbReference type="PhosphoSitePlus" id="Q8R4T2"/>
<dbReference type="PaxDb" id="10116-ENSRNOP00000018488"/>
<dbReference type="Ensembl" id="ENSRNOT00000018488.3">
    <property type="protein sequence ID" value="ENSRNOP00000018488.1"/>
    <property type="gene ID" value="ENSRNOG00000013703.5"/>
</dbReference>
<dbReference type="GeneID" id="140593"/>
<dbReference type="KEGG" id="rno:140593"/>
<dbReference type="UCSC" id="RGD:620778">
    <property type="organism name" value="rat"/>
</dbReference>
<dbReference type="AGR" id="RGD:620778"/>
<dbReference type="CTD" id="6478"/>
<dbReference type="RGD" id="620778">
    <property type="gene designation" value="Siah2"/>
</dbReference>
<dbReference type="eggNOG" id="KOG3002">
    <property type="taxonomic scope" value="Eukaryota"/>
</dbReference>
<dbReference type="GeneTree" id="ENSGT00940000159812"/>
<dbReference type="HOGENOM" id="CLU_028215_0_0_1"/>
<dbReference type="InParanoid" id="Q8R4T2"/>
<dbReference type="OrthoDB" id="941555at2759"/>
<dbReference type="PhylomeDB" id="Q8R4T2"/>
<dbReference type="Reactome" id="R-RNO-5689880">
    <property type="pathway name" value="Ub-specific processing proteases"/>
</dbReference>
<dbReference type="Reactome" id="R-RNO-983168">
    <property type="pathway name" value="Antigen processing: Ubiquitination &amp; Proteasome degradation"/>
</dbReference>
<dbReference type="UniPathway" id="UPA00143"/>
<dbReference type="PRO" id="PR:Q8R4T2"/>
<dbReference type="Proteomes" id="UP000002494">
    <property type="component" value="Chromosome 2"/>
</dbReference>
<dbReference type="Bgee" id="ENSRNOG00000013703">
    <property type="expression patterns" value="Expressed in testis and 20 other cell types or tissues"/>
</dbReference>
<dbReference type="GO" id="GO:0005737">
    <property type="term" value="C:cytoplasm"/>
    <property type="evidence" value="ECO:0000318"/>
    <property type="project" value="GO_Central"/>
</dbReference>
<dbReference type="GO" id="GO:0005829">
    <property type="term" value="C:cytosol"/>
    <property type="evidence" value="ECO:0000266"/>
    <property type="project" value="RGD"/>
</dbReference>
<dbReference type="GO" id="GO:0005769">
    <property type="term" value="C:early endosome"/>
    <property type="evidence" value="ECO:0000314"/>
    <property type="project" value="RGD"/>
</dbReference>
<dbReference type="GO" id="GO:0043025">
    <property type="term" value="C:neuronal cell body"/>
    <property type="evidence" value="ECO:0000314"/>
    <property type="project" value="RGD"/>
</dbReference>
<dbReference type="GO" id="GO:0005654">
    <property type="term" value="C:nucleoplasm"/>
    <property type="evidence" value="ECO:0007669"/>
    <property type="project" value="Ensembl"/>
</dbReference>
<dbReference type="GO" id="GO:0031624">
    <property type="term" value="F:ubiquitin conjugating enzyme binding"/>
    <property type="evidence" value="ECO:0000314"/>
    <property type="project" value="RGD"/>
</dbReference>
<dbReference type="GO" id="GO:0061630">
    <property type="term" value="F:ubiquitin protein ligase activity"/>
    <property type="evidence" value="ECO:0000250"/>
    <property type="project" value="UniProtKB"/>
</dbReference>
<dbReference type="GO" id="GO:0004842">
    <property type="term" value="F:ubiquitin-protein transferase activity"/>
    <property type="evidence" value="ECO:0000250"/>
    <property type="project" value="UniProtKB"/>
</dbReference>
<dbReference type="GO" id="GO:0008270">
    <property type="term" value="F:zinc ion binding"/>
    <property type="evidence" value="ECO:0007669"/>
    <property type="project" value="UniProtKB-KW"/>
</dbReference>
<dbReference type="GO" id="GO:0006915">
    <property type="term" value="P:apoptotic process"/>
    <property type="evidence" value="ECO:0007669"/>
    <property type="project" value="UniProtKB-KW"/>
</dbReference>
<dbReference type="GO" id="GO:0060070">
    <property type="term" value="P:canonical Wnt signaling pathway"/>
    <property type="evidence" value="ECO:0000266"/>
    <property type="project" value="RGD"/>
</dbReference>
<dbReference type="GO" id="GO:0043066">
    <property type="term" value="P:negative regulation of apoptotic process"/>
    <property type="evidence" value="ECO:0000266"/>
    <property type="project" value="RGD"/>
</dbReference>
<dbReference type="GO" id="GO:0090090">
    <property type="term" value="P:negative regulation of canonical Wnt signaling pathway"/>
    <property type="evidence" value="ECO:0000266"/>
    <property type="project" value="RGD"/>
</dbReference>
<dbReference type="GO" id="GO:2001237">
    <property type="term" value="P:negative regulation of extrinsic apoptotic signaling pathway"/>
    <property type="evidence" value="ECO:0000266"/>
    <property type="project" value="RGD"/>
</dbReference>
<dbReference type="GO" id="GO:0043161">
    <property type="term" value="P:proteasome-mediated ubiquitin-dependent protein catabolic process"/>
    <property type="evidence" value="ECO:0000318"/>
    <property type="project" value="GO_Central"/>
</dbReference>
<dbReference type="GO" id="GO:0016567">
    <property type="term" value="P:protein ubiquitination"/>
    <property type="evidence" value="ECO:0007669"/>
    <property type="project" value="UniProtKB-UniPathway"/>
</dbReference>
<dbReference type="GO" id="GO:0042752">
    <property type="term" value="P:regulation of circadian rhythm"/>
    <property type="evidence" value="ECO:0000250"/>
    <property type="project" value="UniProtKB"/>
</dbReference>
<dbReference type="GO" id="GO:0031396">
    <property type="term" value="P:regulation of protein ubiquitination"/>
    <property type="evidence" value="ECO:0000314"/>
    <property type="project" value="RGD"/>
</dbReference>
<dbReference type="GO" id="GO:0048511">
    <property type="term" value="P:rhythmic process"/>
    <property type="evidence" value="ECO:0007669"/>
    <property type="project" value="UniProtKB-KW"/>
</dbReference>
<dbReference type="GO" id="GO:0006511">
    <property type="term" value="P:ubiquitin-dependent protein catabolic process"/>
    <property type="evidence" value="ECO:0000250"/>
    <property type="project" value="UniProtKB"/>
</dbReference>
<dbReference type="CDD" id="cd16752">
    <property type="entry name" value="RING-HC_SIAH2"/>
    <property type="match status" value="1"/>
</dbReference>
<dbReference type="CDD" id="cd03829">
    <property type="entry name" value="Sina"/>
    <property type="match status" value="1"/>
</dbReference>
<dbReference type="FunFam" id="2.60.210.10:FF:000002">
    <property type="entry name" value="E3 ubiquitin-protein ligase"/>
    <property type="match status" value="1"/>
</dbReference>
<dbReference type="FunFam" id="3.30.160.60:FF:000665">
    <property type="entry name" value="E3 ubiquitin-protein ligase"/>
    <property type="match status" value="1"/>
</dbReference>
<dbReference type="FunFam" id="3.30.40.10:FF:000050">
    <property type="entry name" value="E3 ubiquitin-protein ligase"/>
    <property type="match status" value="1"/>
</dbReference>
<dbReference type="FunFam" id="3.30.40.10:FF:000063">
    <property type="entry name" value="E3 ubiquitin-protein ligase"/>
    <property type="match status" value="1"/>
</dbReference>
<dbReference type="Gene3D" id="2.60.210.10">
    <property type="entry name" value="Apoptosis, Tumor Necrosis Factor Receptor Associated Protein 2, Chain A"/>
    <property type="match status" value="1"/>
</dbReference>
<dbReference type="Gene3D" id="3.30.40.10">
    <property type="entry name" value="Zinc/RING finger domain, C3HC4 (zinc finger)"/>
    <property type="match status" value="2"/>
</dbReference>
<dbReference type="InterPro" id="IPR018121">
    <property type="entry name" value="7-in-absentia-prot_TRAF-dom"/>
</dbReference>
<dbReference type="InterPro" id="IPR004162">
    <property type="entry name" value="SINA-like_animal"/>
</dbReference>
<dbReference type="InterPro" id="IPR049548">
    <property type="entry name" value="Sina-like_RING"/>
</dbReference>
<dbReference type="InterPro" id="IPR008974">
    <property type="entry name" value="TRAF-like"/>
</dbReference>
<dbReference type="InterPro" id="IPR001841">
    <property type="entry name" value="Znf_RING"/>
</dbReference>
<dbReference type="InterPro" id="IPR013083">
    <property type="entry name" value="Znf_RING/FYVE/PHD"/>
</dbReference>
<dbReference type="InterPro" id="IPR013010">
    <property type="entry name" value="Znf_SIAH"/>
</dbReference>
<dbReference type="PANTHER" id="PTHR45877">
    <property type="entry name" value="E3 UBIQUITIN-PROTEIN LIGASE SIAH2"/>
    <property type="match status" value="1"/>
</dbReference>
<dbReference type="PANTHER" id="PTHR45877:SF4">
    <property type="entry name" value="E3 UBIQUITIN-PROTEIN LIGASE SIAH2"/>
    <property type="match status" value="1"/>
</dbReference>
<dbReference type="Pfam" id="PF21362">
    <property type="entry name" value="Sina_RING"/>
    <property type="match status" value="1"/>
</dbReference>
<dbReference type="Pfam" id="PF03145">
    <property type="entry name" value="Sina_TRAF"/>
    <property type="match status" value="1"/>
</dbReference>
<dbReference type="Pfam" id="PF21361">
    <property type="entry name" value="Sina_ZnF"/>
    <property type="match status" value="1"/>
</dbReference>
<dbReference type="SUPFAM" id="SSF57850">
    <property type="entry name" value="RING/U-box"/>
    <property type="match status" value="1"/>
</dbReference>
<dbReference type="SUPFAM" id="SSF49599">
    <property type="entry name" value="TRAF domain-like"/>
    <property type="match status" value="1"/>
</dbReference>
<dbReference type="PROSITE" id="PS50089">
    <property type="entry name" value="ZF_RING_2"/>
    <property type="match status" value="1"/>
</dbReference>
<dbReference type="PROSITE" id="PS51081">
    <property type="entry name" value="ZF_SIAH"/>
    <property type="match status" value="1"/>
</dbReference>
<protein>
    <recommendedName>
        <fullName>E3 ubiquitin-protein ligase SIAH2</fullName>
        <ecNumber evidence="8">2.3.2.27</ecNumber>
    </recommendedName>
    <alternativeName>
        <fullName evidence="11">RING-type E3 ubiquitin transferase SIAH2</fullName>
    </alternativeName>
    <alternativeName>
        <fullName>Seven in absentia homolog 2</fullName>
        <shortName>Siah-2</shortName>
    </alternativeName>
</protein>
<organism>
    <name type="scientific">Rattus norvegicus</name>
    <name type="common">Rat</name>
    <dbReference type="NCBI Taxonomy" id="10116"/>
    <lineage>
        <taxon>Eukaryota</taxon>
        <taxon>Metazoa</taxon>
        <taxon>Chordata</taxon>
        <taxon>Craniata</taxon>
        <taxon>Vertebrata</taxon>
        <taxon>Euteleostomi</taxon>
        <taxon>Mammalia</taxon>
        <taxon>Eutheria</taxon>
        <taxon>Euarchontoglires</taxon>
        <taxon>Glires</taxon>
        <taxon>Rodentia</taxon>
        <taxon>Myomorpha</taxon>
        <taxon>Muroidea</taxon>
        <taxon>Muridae</taxon>
        <taxon>Murinae</taxon>
        <taxon>Rattus</taxon>
    </lineage>
</organism>
<proteinExistence type="evidence at protein level"/>
<reference key="1">
    <citation type="submission" date="2001-08" db="EMBL/GenBank/DDBJ databases">
        <title>Rat Siah1A.</title>
        <authorList>
            <person name="Yamaguchi A."/>
            <person name="Hori O."/>
            <person name="Tohyama M."/>
        </authorList>
    </citation>
    <scope>NUCLEOTIDE SEQUENCE [MRNA]</scope>
</reference>
<reference key="2">
    <citation type="journal article" date="2002" name="J. Biol. Chem.">
        <title>Regulation of synaptophysin degradation by mammalian homologues of Seven in Absentia.</title>
        <authorList>
            <person name="Wheeler T.C."/>
            <person name="Chin L.-S."/>
            <person name="Li Y."/>
            <person name="Roudabush F.L."/>
            <person name="Li L."/>
        </authorList>
    </citation>
    <scope>NUCLEOTIDE SEQUENCE [MRNA] OF 71-325</scope>
    <scope>FUNCTION IN SYP DEGRADATION</scope>
    <scope>INTERACTION WITH UBE2E2</scope>
    <source>
        <strain>Sprague-Dawley</strain>
    </source>
</reference>
<reference key="3">
    <citation type="journal article" date="2004" name="Proc. Natl. Acad. Sci. U.S.A.">
        <title>Ubiquitylation of synphilin-1 and alpha-synuclein by SIAH and its presence in cellular inclusions and Lewy bodies imply a role in Parkinson's disease.</title>
        <authorList>
            <person name="Liani E."/>
            <person name="Eyal A."/>
            <person name="Avraham E."/>
            <person name="Shemer R."/>
            <person name="Szargel R."/>
            <person name="Berg D."/>
            <person name="Bornemann A."/>
            <person name="Riess O."/>
            <person name="Ross C.A."/>
            <person name="Rott R."/>
            <person name="Engelender S."/>
        </authorList>
    </citation>
    <scope>INTERACTION WITH SNCAIP</scope>
</reference>
<reference key="4">
    <citation type="journal article" date="2009" name="J. Biol. Chem.">
        <title>Synphilin-1A inhibits seven in absentia homolog (SIAH) and modulates alpha-synuclein monoubiquitylation and inclusion formation.</title>
        <authorList>
            <person name="Szargel R."/>
            <person name="Rott R."/>
            <person name="Eyal A."/>
            <person name="Haskin J."/>
            <person name="Shani V."/>
            <person name="Balan L."/>
            <person name="Wolosker H."/>
            <person name="Engelender S."/>
        </authorList>
    </citation>
    <scope>SUBCELLULAR LOCATION</scope>
    <scope>INTERACTION WITH SNCAIP</scope>
    <scope>TISSUE SPECIFICITY</scope>
</reference>
<feature type="chain" id="PRO_0000056170" description="E3 ubiquitin-protein ligase SIAH2">
    <location>
        <begin position="1"/>
        <end position="325"/>
    </location>
</feature>
<feature type="zinc finger region" description="RING-type" evidence="5">
    <location>
        <begin position="81"/>
        <end position="116"/>
    </location>
</feature>
<feature type="zinc finger region" description="SIAH-type" evidence="6">
    <location>
        <begin position="134"/>
        <end position="194"/>
    </location>
</feature>
<feature type="region of interest" description="Disordered" evidence="7">
    <location>
        <begin position="1"/>
        <end position="43"/>
    </location>
</feature>
<feature type="region of interest" description="SBD" evidence="3">
    <location>
        <begin position="131"/>
        <end position="323"/>
    </location>
</feature>
<feature type="compositionally biased region" description="Polar residues" evidence="7">
    <location>
        <begin position="1"/>
        <end position="15"/>
    </location>
</feature>
<feature type="compositionally biased region" description="Pro residues" evidence="7">
    <location>
        <begin position="17"/>
        <end position="33"/>
    </location>
</feature>
<feature type="compositionally biased region" description="Low complexity" evidence="7">
    <location>
        <begin position="34"/>
        <end position="43"/>
    </location>
</feature>
<feature type="binding site" evidence="3">
    <location>
        <position position="139"/>
    </location>
    <ligand>
        <name>Zn(2+)</name>
        <dbReference type="ChEBI" id="CHEBI:29105"/>
        <label>1</label>
    </ligand>
</feature>
<feature type="binding site" evidence="3">
    <location>
        <position position="146"/>
    </location>
    <ligand>
        <name>Zn(2+)</name>
        <dbReference type="ChEBI" id="CHEBI:29105"/>
        <label>1</label>
    </ligand>
</feature>
<feature type="binding site" evidence="3">
    <location>
        <position position="158"/>
    </location>
    <ligand>
        <name>Zn(2+)</name>
        <dbReference type="ChEBI" id="CHEBI:29105"/>
        <label>1</label>
    </ligand>
</feature>
<feature type="binding site" evidence="3">
    <location>
        <position position="162"/>
    </location>
    <ligand>
        <name>Zn(2+)</name>
        <dbReference type="ChEBI" id="CHEBI:29105"/>
        <label>1</label>
    </ligand>
</feature>
<feature type="binding site" evidence="3">
    <location>
        <position position="169"/>
    </location>
    <ligand>
        <name>Zn(2+)</name>
        <dbReference type="ChEBI" id="CHEBI:29105"/>
        <label>2</label>
    </ligand>
</feature>
<feature type="binding site" evidence="3">
    <location>
        <position position="176"/>
    </location>
    <ligand>
        <name>Zn(2+)</name>
        <dbReference type="ChEBI" id="CHEBI:29105"/>
        <label>2</label>
    </ligand>
</feature>
<feature type="binding site" evidence="3">
    <location>
        <position position="188"/>
    </location>
    <ligand>
        <name>Zn(2+)</name>
        <dbReference type="ChEBI" id="CHEBI:29105"/>
        <label>2</label>
    </ligand>
</feature>
<feature type="binding site" evidence="3">
    <location>
        <position position="193"/>
    </location>
    <ligand>
        <name>Zn(2+)</name>
        <dbReference type="ChEBI" id="CHEBI:29105"/>
        <label>2</label>
    </ligand>
</feature>
<feature type="modified residue" description="Phosphoserine" evidence="2">
    <location>
        <position position="6"/>
    </location>
</feature>
<feature type="modified residue" description="Phosphoserine; by DYRK2" evidence="2">
    <location>
        <position position="16"/>
    </location>
</feature>
<feature type="modified residue" description="Phosphothreonine; by MAPK14" evidence="4">
    <location>
        <position position="24"/>
    </location>
</feature>
<feature type="modified residue" description="Phosphoserine; by DYRK2 and MAPK14" evidence="2">
    <location>
        <position position="29"/>
    </location>
</feature>
<feature type="modified residue" description="Phosphoserine; by DYRK2" evidence="2">
    <location>
        <position position="69"/>
    </location>
</feature>
<feature type="modified residue" description="Phosphothreonine; by DYRK2" evidence="2">
    <location>
        <position position="120"/>
    </location>
</feature>
<gene>
    <name type="primary">Siah2</name>
</gene>